<keyword id="KW-0968">Cytoplasmic vesicle</keyword>
<keyword id="KW-0325">Glycoprotein</keyword>
<keyword id="KW-0472">Membrane</keyword>
<keyword id="KW-1185">Reference proteome</keyword>
<keyword id="KW-0964">Secreted</keyword>
<feature type="chain" id="PRO_0000188983" description="Zona pellucida-binding protein 1">
    <location>
        <begin position="1" status="less than"/>
        <end position="320"/>
    </location>
</feature>
<feature type="glycosylation site" description="N-linked (GlcNAc...) asparagine" evidence="3">
    <location>
        <position position="85"/>
    </location>
</feature>
<feature type="glycosylation site" description="N-linked (GlcNAc...) asparagine" evidence="3">
    <location>
        <position position="158"/>
    </location>
</feature>
<feature type="non-terminal residue">
    <location>
        <position position="1"/>
    </location>
</feature>
<evidence type="ECO:0000250" key="1">
    <source>
        <dbReference type="UniProtKB" id="Q62522"/>
    </source>
</evidence>
<evidence type="ECO:0000250" key="2">
    <source>
        <dbReference type="UniProtKB" id="Q9BS86"/>
    </source>
</evidence>
<evidence type="ECO:0000255" key="3"/>
<evidence type="ECO:0000305" key="4"/>
<name>ZPBP1_CHICK</name>
<accession>Q6Q2W4</accession>
<gene>
    <name type="primary">ZPBP1</name>
</gene>
<proteinExistence type="evidence at transcript level"/>
<protein>
    <recommendedName>
        <fullName>Zona pellucida-binding protein 1</fullName>
    </recommendedName>
</protein>
<comment type="function">
    <text evidence="1">Plays a role in sperm morphogenesis and in sperm-oocyte interaction during fertilization.</text>
</comment>
<comment type="subcellular location">
    <subcellularLocation>
        <location evidence="2">Cytoplasmic vesicle</location>
        <location evidence="2">Secretory vesicle</location>
        <location evidence="2">Acrosome</location>
    </subcellularLocation>
    <subcellularLocation>
        <location evidence="4">Secreted</location>
    </subcellularLocation>
    <subcellularLocation>
        <location evidence="1">Cytoplasmic vesicle</location>
        <location evidence="1">Secretory vesicle</location>
        <location evidence="1">Acrosome membrane</location>
        <topology evidence="1">Peripheral membrane protein</topology>
    </subcellularLocation>
</comment>
<comment type="similarity">
    <text evidence="4">Belongs to the zona pellucida-binding protein Sp38 family.</text>
</comment>
<sequence>GGLLLLGLLIVLLQAAPAVQCLRSAESRSNSLKIVGSILFPVKVYVKLDHSSPHILCVTNRLRNSELIDPVFRWNGPSGYLSSANSSVQISPTGTLILGHFRSDLSGVYTCSLVYKLIAAQPDKRLTIKYHIYAYSDPQYYYELTVQYHAAPCNSFHNTSFGRALLQILSKLVADLSCEVSLIKSECHHVKMQRGGLQSEMFFKFSVTCLDTENNKLCRQSACDKPHRLHKAKDLIERFFKREVEIRKKSTEPLPEIYYIEGTLQMVWVDRCYPGYGINAVRHPDCPECCVICSPRSYNPSNGIHCLQCDTSLIYGATTC</sequence>
<reference key="1">
    <citation type="submission" date="2004-03" db="EMBL/GenBank/DDBJ databases">
        <title>Characterization of zona pellucida binding protein 2 (ZPBP2), a paralog of ZPBP1.</title>
        <authorList>
            <person name="Lin Y.-N."/>
            <person name="Yan W."/>
            <person name="Burns K."/>
            <person name="Matzuk M.M."/>
        </authorList>
    </citation>
    <scope>NUCLEOTIDE SEQUENCE [MRNA]</scope>
    <source>
        <tissue>Testis</tissue>
    </source>
</reference>
<dbReference type="EMBL" id="AY563140">
    <property type="protein sequence ID" value="AAS66455.1"/>
    <property type="molecule type" value="mRNA"/>
</dbReference>
<dbReference type="FunCoup" id="Q6Q2W4">
    <property type="interactions" value="31"/>
</dbReference>
<dbReference type="STRING" id="9031.ENSGALP00000036290"/>
<dbReference type="GlyCosmos" id="Q6Q2W4">
    <property type="glycosylation" value="2 sites, No reported glycans"/>
</dbReference>
<dbReference type="GlyGen" id="Q6Q2W4">
    <property type="glycosylation" value="2 sites"/>
</dbReference>
<dbReference type="PaxDb" id="9031-ENSGALP00000036290"/>
<dbReference type="VEuPathDB" id="HostDB:geneid_404537"/>
<dbReference type="eggNOG" id="ENOG502RJ20">
    <property type="taxonomic scope" value="Eukaryota"/>
</dbReference>
<dbReference type="InParanoid" id="Q6Q2W4"/>
<dbReference type="OrthoDB" id="9045220at2759"/>
<dbReference type="PhylomeDB" id="Q6Q2W4"/>
<dbReference type="Proteomes" id="UP000000539">
    <property type="component" value="Unassembled WGS sequence"/>
</dbReference>
<dbReference type="GO" id="GO:0002080">
    <property type="term" value="C:acrosomal membrane"/>
    <property type="evidence" value="ECO:0007669"/>
    <property type="project" value="UniProtKB-SubCell"/>
</dbReference>
<dbReference type="GO" id="GO:0001669">
    <property type="term" value="C:acrosomal vesicle"/>
    <property type="evidence" value="ECO:0000318"/>
    <property type="project" value="GO_Central"/>
</dbReference>
<dbReference type="GO" id="GO:0005576">
    <property type="term" value="C:extracellular region"/>
    <property type="evidence" value="ECO:0007669"/>
    <property type="project" value="UniProtKB-SubCell"/>
</dbReference>
<dbReference type="GO" id="GO:0002199">
    <property type="term" value="C:zona pellucida receptor complex"/>
    <property type="evidence" value="ECO:0000318"/>
    <property type="project" value="GO_Central"/>
</dbReference>
<dbReference type="GO" id="GO:0001675">
    <property type="term" value="P:acrosome assembly"/>
    <property type="evidence" value="ECO:0000318"/>
    <property type="project" value="GO_Central"/>
</dbReference>
<dbReference type="GO" id="GO:0007339">
    <property type="term" value="P:binding of sperm to zona pellucida"/>
    <property type="evidence" value="ECO:0000318"/>
    <property type="project" value="GO_Central"/>
</dbReference>
<dbReference type="InterPro" id="IPR010857">
    <property type="entry name" value="Sp38-bd"/>
</dbReference>
<dbReference type="InterPro" id="IPR048805">
    <property type="entry name" value="ZPBP1/2_C"/>
</dbReference>
<dbReference type="InterPro" id="IPR048806">
    <property type="entry name" value="ZPBP1/2_N"/>
</dbReference>
<dbReference type="PANTHER" id="PTHR15443">
    <property type="entry name" value="ZONA PELLUCIDA BINDING PROTEIN SP38"/>
    <property type="match status" value="1"/>
</dbReference>
<dbReference type="PANTHER" id="PTHR15443:SF5">
    <property type="entry name" value="ZONA PELLUCIDA-BINDING PROTEIN 1"/>
    <property type="match status" value="1"/>
</dbReference>
<dbReference type="Pfam" id="PF20626">
    <property type="entry name" value="EGF_Sp38_C"/>
    <property type="match status" value="1"/>
</dbReference>
<dbReference type="Pfam" id="PF07354">
    <property type="entry name" value="Sp38"/>
    <property type="match status" value="1"/>
</dbReference>
<organism>
    <name type="scientific">Gallus gallus</name>
    <name type="common">Chicken</name>
    <dbReference type="NCBI Taxonomy" id="9031"/>
    <lineage>
        <taxon>Eukaryota</taxon>
        <taxon>Metazoa</taxon>
        <taxon>Chordata</taxon>
        <taxon>Craniata</taxon>
        <taxon>Vertebrata</taxon>
        <taxon>Euteleostomi</taxon>
        <taxon>Archelosauria</taxon>
        <taxon>Archosauria</taxon>
        <taxon>Dinosauria</taxon>
        <taxon>Saurischia</taxon>
        <taxon>Theropoda</taxon>
        <taxon>Coelurosauria</taxon>
        <taxon>Aves</taxon>
        <taxon>Neognathae</taxon>
        <taxon>Galloanserae</taxon>
        <taxon>Galliformes</taxon>
        <taxon>Phasianidae</taxon>
        <taxon>Phasianinae</taxon>
        <taxon>Gallus</taxon>
    </lineage>
</organism>